<reference key="1">
    <citation type="journal article" date="1987" name="Nucleic Acids Res.">
        <title>Complete sequence of the NS1 gene (M6 RNA) of US bluetongue virus serotype 10.</title>
        <authorList>
            <person name="Lee J."/>
            <person name="Roy P."/>
        </authorList>
    </citation>
    <scope>NUCLEOTIDE SEQUENCE [MRNA]</scope>
</reference>
<name>VNS1_BTV10</name>
<sequence>MERFLRKYNISGDYANATRTFLAISPQWTCSHLKRNCLFNGMCVKQHFERAMIAATDAEEPAKAYKLVELAKEAMYDRETVWLQCFKSFSQPYEEDVEGKMKRCGAQLLEDYRKSGMMDEAVKQSALVNSERIRLDDSLSAMPYIYVPINDGQIVNPTFISRYRQIAYYFYNPDAADDWIDPNLFGIRGQHNQIKREVERQINTCPYTGYRGRVFQVMFLPIQLINFLRMDDFAKHFNRYASMAIQQYLRVGYAEEIRYVQQLFGRVPTGEFPLHQMMLMRRDLPTRDRSIVEARVRRSGDESWQSWLLPMIIIREGLDHQDRWEWFIDYMDRKHTCQLCYLKHSKQIPTCSVIDVRASELTGCSPFKMVKIEEHVGNDSVFKTKLVRDEQIGRIGDHYYTTNCYTGAEALITTAIHIHHWIRGSGIWNDEGWQEGIFMLGRVLLRWELTKAQRSALLRLFCFVCYGYAPRADGTIPDWNNLGNFLDIILKGPELSEDEDERAYATMFEMVRCIITLCYAEKVHFAGFAAPACEGGEVINLAAAMSQMWMEY</sequence>
<evidence type="ECO:0000305" key="1"/>
<feature type="chain" id="PRO_0000222665" description="Non-structural protein NS1">
    <location>
        <begin position="1"/>
        <end position="552"/>
    </location>
</feature>
<dbReference type="EMBL" id="Y00422">
    <property type="protein sequence ID" value="CAA68484.1"/>
    <property type="molecule type" value="mRNA"/>
</dbReference>
<dbReference type="PIR" id="A26863">
    <property type="entry name" value="MNXRS1"/>
</dbReference>
<dbReference type="RefSeq" id="YP_052970.1">
    <property type="nucleotide sequence ID" value="NC_006025.1"/>
</dbReference>
<dbReference type="SMR" id="P07131"/>
<dbReference type="KEGG" id="vg:2943158"/>
<dbReference type="Proteomes" id="UP000007662">
    <property type="component" value="Genome"/>
</dbReference>
<dbReference type="InterPro" id="IPR002630">
    <property type="entry name" value="Orbi_NS1"/>
</dbReference>
<dbReference type="Pfam" id="PF01718">
    <property type="entry name" value="Orbi_NS1"/>
    <property type="match status" value="1"/>
</dbReference>
<organism>
    <name type="scientific">Bluetongue virus 10 (isolate USA)</name>
    <name type="common">BTV 10</name>
    <dbReference type="NCBI Taxonomy" id="10900"/>
    <lineage>
        <taxon>Viruses</taxon>
        <taxon>Riboviria</taxon>
        <taxon>Orthornavirae</taxon>
        <taxon>Duplornaviricota</taxon>
        <taxon>Resentoviricetes</taxon>
        <taxon>Reovirales</taxon>
        <taxon>Sedoreoviridae</taxon>
        <taxon>Orbivirus</taxon>
        <taxon>Bluetongue virus</taxon>
    </lineage>
</organism>
<proteinExistence type="evidence at transcript level"/>
<accession>P07131</accession>
<comment type="similarity">
    <text evidence="1">Belongs to the orbivirus non-structural protein NS1 family.</text>
</comment>
<gene>
    <name type="primary">Segment-5</name>
</gene>
<organismHost>
    <name type="scientific">Antilocapra americana</name>
    <name type="common">Pronghorn</name>
    <dbReference type="NCBI Taxonomy" id="9891"/>
</organismHost>
<organismHost>
    <name type="scientific">Bos taurus</name>
    <name type="common">Bovine</name>
    <dbReference type="NCBI Taxonomy" id="9913"/>
</organismHost>
<organismHost>
    <name type="scientific">Capra hircus</name>
    <name type="common">Goat</name>
    <dbReference type="NCBI Taxonomy" id="9925"/>
</organismHost>
<organismHost>
    <name type="scientific">Culicoides variipennis</name>
    <name type="common">Biting midge</name>
    <dbReference type="NCBI Taxonomy" id="46212"/>
</organismHost>
<organismHost>
    <name type="scientific">Ovis aries</name>
    <name type="common">Sheep</name>
    <dbReference type="NCBI Taxonomy" id="9940"/>
</organismHost>
<keyword id="KW-1185">Reference proteome</keyword>
<protein>
    <recommendedName>
        <fullName>Non-structural protein NS1</fullName>
    </recommendedName>
</protein>